<gene>
    <name type="primary">fba</name>
    <name type="synonym">tsr</name>
    <name type="ordered locus">UU596</name>
</gene>
<accession>Q9PPP3</accession>
<feature type="chain" id="PRO_0000178754" description="Fructose-bisphosphate aldolase">
    <location>
        <begin position="1"/>
        <end position="290"/>
    </location>
</feature>
<feature type="active site" description="Proton donor" evidence="1">
    <location>
        <position position="86"/>
    </location>
</feature>
<feature type="binding site" evidence="1">
    <location>
        <position position="51"/>
    </location>
    <ligand>
        <name>D-glyceraldehyde 3-phosphate</name>
        <dbReference type="ChEBI" id="CHEBI:59776"/>
    </ligand>
</feature>
<feature type="binding site" evidence="1">
    <location>
        <position position="87"/>
    </location>
    <ligand>
        <name>Zn(2+)</name>
        <dbReference type="ChEBI" id="CHEBI:29105"/>
        <label>1</label>
        <note>catalytic</note>
    </ligand>
</feature>
<feature type="binding site" evidence="1">
    <location>
        <position position="107"/>
    </location>
    <ligand>
        <name>Zn(2+)</name>
        <dbReference type="ChEBI" id="CHEBI:29105"/>
        <label>2</label>
    </ligand>
</feature>
<feature type="binding site" evidence="1">
    <location>
        <position position="137"/>
    </location>
    <ligand>
        <name>Zn(2+)</name>
        <dbReference type="ChEBI" id="CHEBI:29105"/>
        <label>2</label>
    </ligand>
</feature>
<feature type="binding site" evidence="1">
    <location>
        <position position="179"/>
    </location>
    <ligand>
        <name>Zn(2+)</name>
        <dbReference type="ChEBI" id="CHEBI:29105"/>
        <label>1</label>
        <note>catalytic</note>
    </ligand>
</feature>
<feature type="binding site" evidence="1">
    <location>
        <position position="180"/>
    </location>
    <ligand>
        <name>dihydroxyacetone phosphate</name>
        <dbReference type="ChEBI" id="CHEBI:57642"/>
    </ligand>
</feature>
<feature type="binding site" evidence="1">
    <location>
        <position position="208"/>
    </location>
    <ligand>
        <name>Zn(2+)</name>
        <dbReference type="ChEBI" id="CHEBI:29105"/>
        <label>1</label>
        <note>catalytic</note>
    </ligand>
</feature>
<feature type="binding site" evidence="1">
    <location>
        <begin position="209"/>
        <end position="211"/>
    </location>
    <ligand>
        <name>dihydroxyacetone phosphate</name>
        <dbReference type="ChEBI" id="CHEBI:57642"/>
    </ligand>
</feature>
<feature type="binding site" evidence="1">
    <location>
        <begin position="230"/>
        <end position="233"/>
    </location>
    <ligand>
        <name>dihydroxyacetone phosphate</name>
        <dbReference type="ChEBI" id="CHEBI:57642"/>
    </ligand>
</feature>
<sequence length="290" mass="31713">MSPLVNAKKMIQNAYENHYAVAAININNLEWIKAALLAAQETNSPLLLATSEGAVKYMGGYDNCYAMVVNLIKQMNIKTPVCLHLDHGTYEGCIKAINAGYSSIMYDGSKLSIEENIKNTKELLTITKLKGVSVEVEVGSIGGTEDGITSEGELANIDDCYQMCLLDIDMLACGIGNIHGIYPKNWKGLNFNLLKEINNKVNKPIVLHGGSGISDEQILKAINLGVAKININTECQIAFSNALQDHLTKAGDLILSKQYDPRKILAYGVDAIKNTIIDKFTKFNSLNKIK</sequence>
<comment type="function">
    <text evidence="1">Catalyzes the aldol condensation of dihydroxyacetone phosphate (DHAP or glycerone-phosphate) with glyceraldehyde 3-phosphate (G3P) to form fructose 1,6-bisphosphate (FBP) in gluconeogenesis and the reverse reaction in glycolysis.</text>
</comment>
<comment type="catalytic activity">
    <reaction>
        <text>beta-D-fructose 1,6-bisphosphate = D-glyceraldehyde 3-phosphate + dihydroxyacetone phosphate</text>
        <dbReference type="Rhea" id="RHEA:14729"/>
        <dbReference type="ChEBI" id="CHEBI:32966"/>
        <dbReference type="ChEBI" id="CHEBI:57642"/>
        <dbReference type="ChEBI" id="CHEBI:59776"/>
        <dbReference type="EC" id="4.1.2.13"/>
    </reaction>
</comment>
<comment type="cofactor">
    <cofactor evidence="1">
        <name>Zn(2+)</name>
        <dbReference type="ChEBI" id="CHEBI:29105"/>
    </cofactor>
    <text evidence="1">Binds 2 Zn(2+) ions per subunit. One is catalytic and the other provides a structural contribution.</text>
</comment>
<comment type="pathway">
    <text>Carbohydrate degradation; glycolysis; D-glyceraldehyde 3-phosphate and glycerone phosphate from D-glucose: step 4/4.</text>
</comment>
<comment type="subunit">
    <text evidence="1">Homodimer.</text>
</comment>
<comment type="similarity">
    <text evidence="2">Belongs to the class II fructose-bisphosphate aldolase family.</text>
</comment>
<protein>
    <recommendedName>
        <fullName>Fructose-bisphosphate aldolase</fullName>
        <shortName>FBP aldolase</shortName>
        <shortName>FBPA</shortName>
        <ecNumber>4.1.2.13</ecNumber>
    </recommendedName>
    <alternativeName>
        <fullName>Fructose-1,6-bisphosphate aldolase</fullName>
    </alternativeName>
</protein>
<name>ALF_UREPA</name>
<dbReference type="EC" id="4.1.2.13"/>
<dbReference type="EMBL" id="AF222894">
    <property type="protein sequence ID" value="AAF31010.1"/>
    <property type="molecule type" value="Genomic_DNA"/>
</dbReference>
<dbReference type="RefSeq" id="WP_006688794.1">
    <property type="nucleotide sequence ID" value="NC_002162.1"/>
</dbReference>
<dbReference type="SMR" id="Q9PPP3"/>
<dbReference type="STRING" id="273119.UU596"/>
<dbReference type="EnsemblBacteria" id="AAF31010">
    <property type="protein sequence ID" value="AAF31010"/>
    <property type="gene ID" value="UU596"/>
</dbReference>
<dbReference type="GeneID" id="29672322"/>
<dbReference type="KEGG" id="uur:UU596"/>
<dbReference type="eggNOG" id="COG0191">
    <property type="taxonomic scope" value="Bacteria"/>
</dbReference>
<dbReference type="HOGENOM" id="CLU_040088_0_1_14"/>
<dbReference type="OrthoDB" id="9803995at2"/>
<dbReference type="UniPathway" id="UPA00109">
    <property type="reaction ID" value="UER00183"/>
</dbReference>
<dbReference type="Proteomes" id="UP000000423">
    <property type="component" value="Chromosome"/>
</dbReference>
<dbReference type="GO" id="GO:0004332">
    <property type="term" value="F:fructose-bisphosphate aldolase activity"/>
    <property type="evidence" value="ECO:0007669"/>
    <property type="project" value="UniProtKB-EC"/>
</dbReference>
<dbReference type="GO" id="GO:0008270">
    <property type="term" value="F:zinc ion binding"/>
    <property type="evidence" value="ECO:0007669"/>
    <property type="project" value="InterPro"/>
</dbReference>
<dbReference type="GO" id="GO:0030388">
    <property type="term" value="P:fructose 1,6-bisphosphate metabolic process"/>
    <property type="evidence" value="ECO:0007669"/>
    <property type="project" value="InterPro"/>
</dbReference>
<dbReference type="GO" id="GO:0006096">
    <property type="term" value="P:glycolytic process"/>
    <property type="evidence" value="ECO:0007669"/>
    <property type="project" value="UniProtKB-UniPathway"/>
</dbReference>
<dbReference type="CDD" id="cd00947">
    <property type="entry name" value="TBP_aldolase_IIB"/>
    <property type="match status" value="1"/>
</dbReference>
<dbReference type="Gene3D" id="3.20.20.70">
    <property type="entry name" value="Aldolase class I"/>
    <property type="match status" value="1"/>
</dbReference>
<dbReference type="InterPro" id="IPR013785">
    <property type="entry name" value="Aldolase_TIM"/>
</dbReference>
<dbReference type="InterPro" id="IPR050246">
    <property type="entry name" value="Class_II_FBP_aldolase"/>
</dbReference>
<dbReference type="InterPro" id="IPR000771">
    <property type="entry name" value="FBA_II"/>
</dbReference>
<dbReference type="InterPro" id="IPR011289">
    <property type="entry name" value="Fruc_bis_ald_class-2"/>
</dbReference>
<dbReference type="NCBIfam" id="TIGR00167">
    <property type="entry name" value="cbbA"/>
    <property type="match status" value="1"/>
</dbReference>
<dbReference type="NCBIfam" id="TIGR01859">
    <property type="entry name" value="fruc_bis_ald"/>
    <property type="match status" value="1"/>
</dbReference>
<dbReference type="PANTHER" id="PTHR30304">
    <property type="entry name" value="D-TAGATOSE-1,6-BISPHOSPHATE ALDOLASE"/>
    <property type="match status" value="1"/>
</dbReference>
<dbReference type="PANTHER" id="PTHR30304:SF0">
    <property type="entry name" value="D-TAGATOSE-1,6-BISPHOSPHATE ALDOLASE SUBUNIT GATY-RELATED"/>
    <property type="match status" value="1"/>
</dbReference>
<dbReference type="Pfam" id="PF01116">
    <property type="entry name" value="F_bP_aldolase"/>
    <property type="match status" value="1"/>
</dbReference>
<dbReference type="PIRSF" id="PIRSF001359">
    <property type="entry name" value="F_bP_aldolase_II"/>
    <property type="match status" value="1"/>
</dbReference>
<dbReference type="SUPFAM" id="SSF51569">
    <property type="entry name" value="Aldolase"/>
    <property type="match status" value="1"/>
</dbReference>
<dbReference type="PROSITE" id="PS00806">
    <property type="entry name" value="ALDOLASE_CLASS_II_2"/>
    <property type="match status" value="1"/>
</dbReference>
<proteinExistence type="inferred from homology"/>
<organism>
    <name type="scientific">Ureaplasma parvum serovar 3 (strain ATCC 700970)</name>
    <dbReference type="NCBI Taxonomy" id="273119"/>
    <lineage>
        <taxon>Bacteria</taxon>
        <taxon>Bacillati</taxon>
        <taxon>Mycoplasmatota</taxon>
        <taxon>Mycoplasmoidales</taxon>
        <taxon>Mycoplasmoidaceae</taxon>
        <taxon>Ureaplasma</taxon>
    </lineage>
</organism>
<keyword id="KW-0324">Glycolysis</keyword>
<keyword id="KW-0456">Lyase</keyword>
<keyword id="KW-0479">Metal-binding</keyword>
<keyword id="KW-1185">Reference proteome</keyword>
<keyword id="KW-0862">Zinc</keyword>
<reference key="1">
    <citation type="journal article" date="2000" name="Nature">
        <title>The complete sequence of the mucosal pathogen Ureaplasma urealyticum.</title>
        <authorList>
            <person name="Glass J.I."/>
            <person name="Lefkowitz E.J."/>
            <person name="Glass J.S."/>
            <person name="Heiner C.R."/>
            <person name="Chen E.Y."/>
            <person name="Cassell G.H."/>
        </authorList>
    </citation>
    <scope>NUCLEOTIDE SEQUENCE [LARGE SCALE GENOMIC DNA]</scope>
    <source>
        <strain>ATCC 700970</strain>
    </source>
</reference>
<evidence type="ECO:0000250" key="1"/>
<evidence type="ECO:0000305" key="2"/>